<sequence>MARIAGINIPDHKHAVIALTSIYGVGKTRSKAILAAAGIAEDVKISELSEGQIDTLRDEVAKFVVEGDLRREISMSIKRLMDLGCYRGLRHRRGLPVRGQRTKTNARTRKGPRKPIKK</sequence>
<reference key="1">
    <citation type="journal article" date="2002" name="Nucleic Acids Res.">
        <title>Genome sequence of Shigella flexneri 2a: insights into pathogenicity through comparison with genomes of Escherichia coli K12 and O157.</title>
        <authorList>
            <person name="Jin Q."/>
            <person name="Yuan Z."/>
            <person name="Xu J."/>
            <person name="Wang Y."/>
            <person name="Shen Y."/>
            <person name="Lu W."/>
            <person name="Wang J."/>
            <person name="Liu H."/>
            <person name="Yang J."/>
            <person name="Yang F."/>
            <person name="Zhang X."/>
            <person name="Zhang J."/>
            <person name="Yang G."/>
            <person name="Wu H."/>
            <person name="Qu D."/>
            <person name="Dong J."/>
            <person name="Sun L."/>
            <person name="Xue Y."/>
            <person name="Zhao A."/>
            <person name="Gao Y."/>
            <person name="Zhu J."/>
            <person name="Kan B."/>
            <person name="Ding K."/>
            <person name="Chen S."/>
            <person name="Cheng H."/>
            <person name="Yao Z."/>
            <person name="He B."/>
            <person name="Chen R."/>
            <person name="Ma D."/>
            <person name="Qiang B."/>
            <person name="Wen Y."/>
            <person name="Hou Y."/>
            <person name="Yu J."/>
        </authorList>
    </citation>
    <scope>NUCLEOTIDE SEQUENCE [LARGE SCALE GENOMIC DNA]</scope>
    <source>
        <strain>301 / Serotype 2a</strain>
    </source>
</reference>
<reference key="2">
    <citation type="journal article" date="2003" name="Infect. Immun.">
        <title>Complete genome sequence and comparative genomics of Shigella flexneri serotype 2a strain 2457T.</title>
        <authorList>
            <person name="Wei J."/>
            <person name="Goldberg M.B."/>
            <person name="Burland V."/>
            <person name="Venkatesan M.M."/>
            <person name="Deng W."/>
            <person name="Fournier G."/>
            <person name="Mayhew G.F."/>
            <person name="Plunkett G. III"/>
            <person name="Rose D.J."/>
            <person name="Darling A."/>
            <person name="Mau B."/>
            <person name="Perna N.T."/>
            <person name="Payne S.M."/>
            <person name="Runyen-Janecky L.J."/>
            <person name="Zhou S."/>
            <person name="Schwartz D.C."/>
            <person name="Blattner F.R."/>
        </authorList>
    </citation>
    <scope>NUCLEOTIDE SEQUENCE [LARGE SCALE GENOMIC DNA]</scope>
    <source>
        <strain>ATCC 700930 / 2457T / Serotype 2a</strain>
    </source>
</reference>
<accession>P0A7T2</accession>
<accession>P02369</accession>
<comment type="function">
    <text evidence="1">Located at the top of the head of the 30S subunit, it contacts several helices of the 16S rRNA. In the E.coli 70S ribosome in the initiation state it has been modeled to contact the 23S rRNA (bridge B1a) and protein L5 of the 50S subunit (bridge B1b), connecting the 2 subunits; bridge B1a is broken in the model with bound EF-G, while the protein-protein contacts between S13 and L5 in B1b change. Contacts the tRNAs in the A and P sites (By similarity).</text>
</comment>
<comment type="subunit">
    <text evidence="1">Part of the 30S ribosomal subunit. Forms a loose heterodimer with protein S19. Cross-links to the P site tRNA and weakly to the A site tRNA. Forms two bridges to the 50S subunit in the 70S ribosome, contacting the 16S rRNA and protein L5 (By similarity).</text>
</comment>
<comment type="similarity">
    <text evidence="3">Belongs to the universal ribosomal protein uS13 family.</text>
</comment>
<feature type="initiator methionine" description="Removed" evidence="1">
    <location>
        <position position="1"/>
    </location>
</feature>
<feature type="chain" id="PRO_0000132133" description="Small ribosomal subunit protein uS13">
    <location>
        <begin position="2"/>
        <end position="118"/>
    </location>
</feature>
<feature type="region of interest" description="Disordered" evidence="2">
    <location>
        <begin position="94"/>
        <end position="118"/>
    </location>
</feature>
<keyword id="KW-1185">Reference proteome</keyword>
<keyword id="KW-0687">Ribonucleoprotein</keyword>
<keyword id="KW-0689">Ribosomal protein</keyword>
<keyword id="KW-0694">RNA-binding</keyword>
<keyword id="KW-0699">rRNA-binding</keyword>
<keyword id="KW-0820">tRNA-binding</keyword>
<protein>
    <recommendedName>
        <fullName evidence="3">Small ribosomal subunit protein uS13</fullName>
    </recommendedName>
    <alternativeName>
        <fullName>30S ribosomal protein S13</fullName>
    </alternativeName>
</protein>
<evidence type="ECO:0000250" key="1"/>
<evidence type="ECO:0000256" key="2">
    <source>
        <dbReference type="SAM" id="MobiDB-lite"/>
    </source>
</evidence>
<evidence type="ECO:0000305" key="3"/>
<dbReference type="EMBL" id="AE005674">
    <property type="protein sequence ID" value="AAN44793.1"/>
    <property type="molecule type" value="Genomic_DNA"/>
</dbReference>
<dbReference type="EMBL" id="AE014073">
    <property type="protein sequence ID" value="AAP19383.1"/>
    <property type="molecule type" value="Genomic_DNA"/>
</dbReference>
<dbReference type="RefSeq" id="NP_709086.1">
    <property type="nucleotide sequence ID" value="NC_004337.2"/>
</dbReference>
<dbReference type="RefSeq" id="WP_000090775.1">
    <property type="nucleotide sequence ID" value="NZ_WPGW01000088.1"/>
</dbReference>
<dbReference type="SMR" id="P0A7T2"/>
<dbReference type="STRING" id="198214.SF3330"/>
<dbReference type="PaxDb" id="198214-SF3330"/>
<dbReference type="GeneID" id="1026992"/>
<dbReference type="GeneID" id="93778689"/>
<dbReference type="KEGG" id="sfl:SF3330"/>
<dbReference type="KEGG" id="sfx:S4432"/>
<dbReference type="PATRIC" id="fig|198214.7.peg.3939"/>
<dbReference type="HOGENOM" id="CLU_103849_1_2_6"/>
<dbReference type="Proteomes" id="UP000001006">
    <property type="component" value="Chromosome"/>
</dbReference>
<dbReference type="Proteomes" id="UP000002673">
    <property type="component" value="Chromosome"/>
</dbReference>
<dbReference type="GO" id="GO:0005829">
    <property type="term" value="C:cytosol"/>
    <property type="evidence" value="ECO:0007669"/>
    <property type="project" value="TreeGrafter"/>
</dbReference>
<dbReference type="GO" id="GO:0015935">
    <property type="term" value="C:small ribosomal subunit"/>
    <property type="evidence" value="ECO:0007669"/>
    <property type="project" value="TreeGrafter"/>
</dbReference>
<dbReference type="GO" id="GO:0019843">
    <property type="term" value="F:rRNA binding"/>
    <property type="evidence" value="ECO:0007669"/>
    <property type="project" value="UniProtKB-UniRule"/>
</dbReference>
<dbReference type="GO" id="GO:0003735">
    <property type="term" value="F:structural constituent of ribosome"/>
    <property type="evidence" value="ECO:0007669"/>
    <property type="project" value="InterPro"/>
</dbReference>
<dbReference type="GO" id="GO:0000049">
    <property type="term" value="F:tRNA binding"/>
    <property type="evidence" value="ECO:0007669"/>
    <property type="project" value="UniProtKB-UniRule"/>
</dbReference>
<dbReference type="GO" id="GO:0006412">
    <property type="term" value="P:translation"/>
    <property type="evidence" value="ECO:0007669"/>
    <property type="project" value="UniProtKB-UniRule"/>
</dbReference>
<dbReference type="FunFam" id="1.10.8.50:FF:000001">
    <property type="entry name" value="30S ribosomal protein S13"/>
    <property type="match status" value="1"/>
</dbReference>
<dbReference type="FunFam" id="4.10.910.10:FF:000001">
    <property type="entry name" value="30S ribosomal protein S13"/>
    <property type="match status" value="1"/>
</dbReference>
<dbReference type="Gene3D" id="1.10.8.50">
    <property type="match status" value="1"/>
</dbReference>
<dbReference type="Gene3D" id="4.10.910.10">
    <property type="entry name" value="30s ribosomal protein s13, domain 2"/>
    <property type="match status" value="1"/>
</dbReference>
<dbReference type="HAMAP" id="MF_01315">
    <property type="entry name" value="Ribosomal_uS13"/>
    <property type="match status" value="1"/>
</dbReference>
<dbReference type="InterPro" id="IPR027437">
    <property type="entry name" value="Rbsml_uS13_C"/>
</dbReference>
<dbReference type="InterPro" id="IPR001892">
    <property type="entry name" value="Ribosomal_uS13"/>
</dbReference>
<dbReference type="InterPro" id="IPR010979">
    <property type="entry name" value="Ribosomal_uS13-like_H2TH"/>
</dbReference>
<dbReference type="InterPro" id="IPR019980">
    <property type="entry name" value="Ribosomal_uS13_bac-type"/>
</dbReference>
<dbReference type="InterPro" id="IPR018269">
    <property type="entry name" value="Ribosomal_uS13_CS"/>
</dbReference>
<dbReference type="NCBIfam" id="TIGR03631">
    <property type="entry name" value="uS13_bact"/>
    <property type="match status" value="1"/>
</dbReference>
<dbReference type="PANTHER" id="PTHR10871">
    <property type="entry name" value="30S RIBOSOMAL PROTEIN S13/40S RIBOSOMAL PROTEIN S18"/>
    <property type="match status" value="1"/>
</dbReference>
<dbReference type="PANTHER" id="PTHR10871:SF1">
    <property type="entry name" value="SMALL RIBOSOMAL SUBUNIT PROTEIN US13M"/>
    <property type="match status" value="1"/>
</dbReference>
<dbReference type="Pfam" id="PF00416">
    <property type="entry name" value="Ribosomal_S13"/>
    <property type="match status" value="1"/>
</dbReference>
<dbReference type="PIRSF" id="PIRSF002134">
    <property type="entry name" value="Ribosomal_S13"/>
    <property type="match status" value="1"/>
</dbReference>
<dbReference type="SUPFAM" id="SSF46946">
    <property type="entry name" value="S13-like H2TH domain"/>
    <property type="match status" value="1"/>
</dbReference>
<dbReference type="PROSITE" id="PS00646">
    <property type="entry name" value="RIBOSOMAL_S13_1"/>
    <property type="match status" value="1"/>
</dbReference>
<dbReference type="PROSITE" id="PS50159">
    <property type="entry name" value="RIBOSOMAL_S13_2"/>
    <property type="match status" value="1"/>
</dbReference>
<name>RS13_SHIFL</name>
<proteinExistence type="inferred from homology"/>
<organism>
    <name type="scientific">Shigella flexneri</name>
    <dbReference type="NCBI Taxonomy" id="623"/>
    <lineage>
        <taxon>Bacteria</taxon>
        <taxon>Pseudomonadati</taxon>
        <taxon>Pseudomonadota</taxon>
        <taxon>Gammaproteobacteria</taxon>
        <taxon>Enterobacterales</taxon>
        <taxon>Enterobacteriaceae</taxon>
        <taxon>Shigella</taxon>
    </lineage>
</organism>
<gene>
    <name type="primary">rpsM</name>
    <name type="ordered locus">SF3330</name>
    <name type="ordered locus">S4432</name>
</gene>